<comment type="function">
    <text evidence="1">Binds directly to 16S ribosomal RNA.</text>
</comment>
<comment type="similarity">
    <text evidence="1">Belongs to the bacterial ribosomal protein bS20 family.</text>
</comment>
<name>RS20_ESCF3</name>
<protein>
    <recommendedName>
        <fullName evidence="1">Small ribosomal subunit protein bS20</fullName>
    </recommendedName>
    <alternativeName>
        <fullName evidence="3">30S ribosomal protein S20</fullName>
    </alternativeName>
</protein>
<gene>
    <name evidence="1" type="primary">rpsT</name>
    <name type="ordered locus">EFER_0015</name>
</gene>
<accession>B7LVQ1</accession>
<organism>
    <name type="scientific">Escherichia fergusonii (strain ATCC 35469 / DSM 13698 / CCUG 18766 / IAM 14443 / JCM 21226 / LMG 7866 / NBRC 102419 / NCTC 12128 / CDC 0568-73)</name>
    <dbReference type="NCBI Taxonomy" id="585054"/>
    <lineage>
        <taxon>Bacteria</taxon>
        <taxon>Pseudomonadati</taxon>
        <taxon>Pseudomonadota</taxon>
        <taxon>Gammaproteobacteria</taxon>
        <taxon>Enterobacterales</taxon>
        <taxon>Enterobacteriaceae</taxon>
        <taxon>Escherichia</taxon>
    </lineage>
</organism>
<keyword id="KW-0687">Ribonucleoprotein</keyword>
<keyword id="KW-0689">Ribosomal protein</keyword>
<keyword id="KW-0694">RNA-binding</keyword>
<keyword id="KW-0699">rRNA-binding</keyword>
<proteinExistence type="inferred from homology"/>
<feature type="chain" id="PRO_1000126447" description="Small ribosomal subunit protein bS20">
    <location>
        <begin position="1"/>
        <end position="87"/>
    </location>
</feature>
<feature type="region of interest" description="Disordered" evidence="2">
    <location>
        <begin position="1"/>
        <end position="26"/>
    </location>
</feature>
<reference key="1">
    <citation type="journal article" date="2009" name="PLoS Genet.">
        <title>Organised genome dynamics in the Escherichia coli species results in highly diverse adaptive paths.</title>
        <authorList>
            <person name="Touchon M."/>
            <person name="Hoede C."/>
            <person name="Tenaillon O."/>
            <person name="Barbe V."/>
            <person name="Baeriswyl S."/>
            <person name="Bidet P."/>
            <person name="Bingen E."/>
            <person name="Bonacorsi S."/>
            <person name="Bouchier C."/>
            <person name="Bouvet O."/>
            <person name="Calteau A."/>
            <person name="Chiapello H."/>
            <person name="Clermont O."/>
            <person name="Cruveiller S."/>
            <person name="Danchin A."/>
            <person name="Diard M."/>
            <person name="Dossat C."/>
            <person name="Karoui M.E."/>
            <person name="Frapy E."/>
            <person name="Garry L."/>
            <person name="Ghigo J.M."/>
            <person name="Gilles A.M."/>
            <person name="Johnson J."/>
            <person name="Le Bouguenec C."/>
            <person name="Lescat M."/>
            <person name="Mangenot S."/>
            <person name="Martinez-Jehanne V."/>
            <person name="Matic I."/>
            <person name="Nassif X."/>
            <person name="Oztas S."/>
            <person name="Petit M.A."/>
            <person name="Pichon C."/>
            <person name="Rouy Z."/>
            <person name="Ruf C.S."/>
            <person name="Schneider D."/>
            <person name="Tourret J."/>
            <person name="Vacherie B."/>
            <person name="Vallenet D."/>
            <person name="Medigue C."/>
            <person name="Rocha E.P.C."/>
            <person name="Denamur E."/>
        </authorList>
    </citation>
    <scope>NUCLEOTIDE SEQUENCE [LARGE SCALE GENOMIC DNA]</scope>
    <source>
        <strain>ATCC 35469 / DSM 13698 / BCRC 15582 / CCUG 18766 / IAM 14443 / JCM 21226 / LMG 7866 / NBRC 102419 / NCTC 12128 / CDC 0568-73</strain>
    </source>
</reference>
<evidence type="ECO:0000255" key="1">
    <source>
        <dbReference type="HAMAP-Rule" id="MF_00500"/>
    </source>
</evidence>
<evidence type="ECO:0000256" key="2">
    <source>
        <dbReference type="SAM" id="MobiDB-lite"/>
    </source>
</evidence>
<evidence type="ECO:0000305" key="3"/>
<sequence length="87" mass="9684">MANIKSAKKRAIQSEKARKHNASRRSMMRTFIKKVYAAIEAGDKAAAQKAFNEMQPIVDRQAAKGLIHKNKAARHKANLTAQINKLA</sequence>
<dbReference type="EMBL" id="CU928158">
    <property type="protein sequence ID" value="CAQ87603.1"/>
    <property type="molecule type" value="Genomic_DNA"/>
</dbReference>
<dbReference type="RefSeq" id="WP_001274021.1">
    <property type="nucleotide sequence ID" value="NC_011740.1"/>
</dbReference>
<dbReference type="SMR" id="B7LVQ1"/>
<dbReference type="GeneID" id="93777413"/>
<dbReference type="KEGG" id="efe:EFER_0015"/>
<dbReference type="HOGENOM" id="CLU_160655_4_0_6"/>
<dbReference type="OrthoDB" id="9807974at2"/>
<dbReference type="Proteomes" id="UP000000745">
    <property type="component" value="Chromosome"/>
</dbReference>
<dbReference type="GO" id="GO:0005829">
    <property type="term" value="C:cytosol"/>
    <property type="evidence" value="ECO:0007669"/>
    <property type="project" value="TreeGrafter"/>
</dbReference>
<dbReference type="GO" id="GO:0015935">
    <property type="term" value="C:small ribosomal subunit"/>
    <property type="evidence" value="ECO:0007669"/>
    <property type="project" value="TreeGrafter"/>
</dbReference>
<dbReference type="GO" id="GO:0070181">
    <property type="term" value="F:small ribosomal subunit rRNA binding"/>
    <property type="evidence" value="ECO:0007669"/>
    <property type="project" value="TreeGrafter"/>
</dbReference>
<dbReference type="GO" id="GO:0003735">
    <property type="term" value="F:structural constituent of ribosome"/>
    <property type="evidence" value="ECO:0007669"/>
    <property type="project" value="InterPro"/>
</dbReference>
<dbReference type="GO" id="GO:0006412">
    <property type="term" value="P:translation"/>
    <property type="evidence" value="ECO:0007669"/>
    <property type="project" value="UniProtKB-UniRule"/>
</dbReference>
<dbReference type="FunFam" id="1.20.58.110:FF:000001">
    <property type="entry name" value="30S ribosomal protein S20"/>
    <property type="match status" value="1"/>
</dbReference>
<dbReference type="Gene3D" id="1.20.58.110">
    <property type="entry name" value="Ribosomal protein S20"/>
    <property type="match status" value="1"/>
</dbReference>
<dbReference type="HAMAP" id="MF_00500">
    <property type="entry name" value="Ribosomal_bS20"/>
    <property type="match status" value="1"/>
</dbReference>
<dbReference type="InterPro" id="IPR002583">
    <property type="entry name" value="Ribosomal_bS20"/>
</dbReference>
<dbReference type="InterPro" id="IPR036510">
    <property type="entry name" value="Ribosomal_bS20_sf"/>
</dbReference>
<dbReference type="NCBIfam" id="TIGR00029">
    <property type="entry name" value="S20"/>
    <property type="match status" value="1"/>
</dbReference>
<dbReference type="PANTHER" id="PTHR33398">
    <property type="entry name" value="30S RIBOSOMAL PROTEIN S20"/>
    <property type="match status" value="1"/>
</dbReference>
<dbReference type="PANTHER" id="PTHR33398:SF1">
    <property type="entry name" value="SMALL RIBOSOMAL SUBUNIT PROTEIN BS20C"/>
    <property type="match status" value="1"/>
</dbReference>
<dbReference type="Pfam" id="PF01649">
    <property type="entry name" value="Ribosomal_S20p"/>
    <property type="match status" value="1"/>
</dbReference>
<dbReference type="SUPFAM" id="SSF46992">
    <property type="entry name" value="Ribosomal protein S20"/>
    <property type="match status" value="1"/>
</dbReference>